<comment type="function">
    <text evidence="1">Catalyzes the condensation reaction of fatty acid synthesis by the addition to an acyl acceptor of two carbons from malonyl-ACP. Catalyzes the first condensation reaction which initiates fatty acid synthesis and may therefore play a role in governing the total rate of fatty acid production. Possesses both acetoacetyl-ACP synthase and acetyl transacylase activities. Its substrate specificity determines the biosynthesis of branched-chain and/or straight-chain of fatty acids.</text>
</comment>
<comment type="catalytic activity">
    <reaction evidence="1">
        <text>malonyl-[ACP] + acetyl-CoA + H(+) = 3-oxobutanoyl-[ACP] + CO2 + CoA</text>
        <dbReference type="Rhea" id="RHEA:12080"/>
        <dbReference type="Rhea" id="RHEA-COMP:9623"/>
        <dbReference type="Rhea" id="RHEA-COMP:9625"/>
        <dbReference type="ChEBI" id="CHEBI:15378"/>
        <dbReference type="ChEBI" id="CHEBI:16526"/>
        <dbReference type="ChEBI" id="CHEBI:57287"/>
        <dbReference type="ChEBI" id="CHEBI:57288"/>
        <dbReference type="ChEBI" id="CHEBI:78449"/>
        <dbReference type="ChEBI" id="CHEBI:78450"/>
        <dbReference type="EC" id="2.3.1.180"/>
    </reaction>
</comment>
<comment type="pathway">
    <text evidence="1">Lipid metabolism; fatty acid biosynthesis.</text>
</comment>
<comment type="subunit">
    <text evidence="1">Homodimer.</text>
</comment>
<comment type="subcellular location">
    <subcellularLocation>
        <location evidence="1">Cytoplasm</location>
    </subcellularLocation>
</comment>
<comment type="domain">
    <text evidence="1">The last Arg residue of the ACP-binding site is essential for the weak association between ACP/AcpP and FabH.</text>
</comment>
<comment type="similarity">
    <text evidence="1">Belongs to the thiolase-like superfamily. FabH family.</text>
</comment>
<sequence>MEFYASLKSIAMHVPSERVKNAEFQQFLDTSDEWIEKRTGIKERRFASNEEKSSDLGVIAAKQAIERAHLTPKDIDLVVVATLSPDFLAMPSTACVLSAKLGIENKPAFDISAACTGFIYLLSVAKAYVESGMCENVLIVGAEKTSSVLDFKDRGTCILFGDGAGACVIGRTKRLKESILDVQISANGNFSNYLYTPRTLKPTPFNAKEEALEPFLCMKGNEVFKLAVKTLLKDVEMILEKNALKPEDVRLFIPHQANFRIIQAVREHLDFKDEQVVLTVHKYGNTSAASIPMAMGEAYEEGRLKKGDLMLLDAFGGGLTWGSALVYFGG</sequence>
<reference key="1">
    <citation type="journal article" date="2009" name="J. Bacteriol.">
        <title>The complete genome sequence of Helicobacter pylori strain G27.</title>
        <authorList>
            <person name="Baltrus D.A."/>
            <person name="Amieva M.R."/>
            <person name="Covacci A."/>
            <person name="Lowe T.M."/>
            <person name="Merrell D.S."/>
            <person name="Ottemann K.M."/>
            <person name="Stein M."/>
            <person name="Salama N.R."/>
            <person name="Guillemin K."/>
        </authorList>
    </citation>
    <scope>NUCLEOTIDE SEQUENCE [LARGE SCALE GENOMIC DNA]</scope>
    <source>
        <strain>G27</strain>
    </source>
</reference>
<name>FABH_HELPG</name>
<feature type="chain" id="PRO_1000187869" description="Beta-ketoacyl-[acyl-carrier-protein] synthase III">
    <location>
        <begin position="1"/>
        <end position="330"/>
    </location>
</feature>
<feature type="region of interest" description="ACP-binding" evidence="1">
    <location>
        <begin position="256"/>
        <end position="260"/>
    </location>
</feature>
<feature type="active site" evidence="1">
    <location>
        <position position="115"/>
    </location>
</feature>
<feature type="active site" evidence="1">
    <location>
        <position position="255"/>
    </location>
</feature>
<feature type="active site" evidence="1">
    <location>
        <position position="285"/>
    </location>
</feature>
<proteinExistence type="inferred from homology"/>
<accession>B5Z9X2</accession>
<gene>
    <name evidence="1" type="primary">fabH</name>
    <name type="ordered locus">HPG27_185</name>
</gene>
<dbReference type="EC" id="2.3.1.180" evidence="1"/>
<dbReference type="EMBL" id="CP001173">
    <property type="protein sequence ID" value="ACI26952.1"/>
    <property type="molecule type" value="Genomic_DNA"/>
</dbReference>
<dbReference type="RefSeq" id="WP_000397851.1">
    <property type="nucleotide sequence ID" value="NC_011333.1"/>
</dbReference>
<dbReference type="SMR" id="B5Z9X2"/>
<dbReference type="KEGG" id="hpg:HPG27_185"/>
<dbReference type="HOGENOM" id="CLU_039592_4_1_7"/>
<dbReference type="UniPathway" id="UPA00094"/>
<dbReference type="Proteomes" id="UP000001735">
    <property type="component" value="Chromosome"/>
</dbReference>
<dbReference type="GO" id="GO:0005737">
    <property type="term" value="C:cytoplasm"/>
    <property type="evidence" value="ECO:0007669"/>
    <property type="project" value="UniProtKB-SubCell"/>
</dbReference>
<dbReference type="GO" id="GO:0004315">
    <property type="term" value="F:3-oxoacyl-[acyl-carrier-protein] synthase activity"/>
    <property type="evidence" value="ECO:0007669"/>
    <property type="project" value="InterPro"/>
</dbReference>
<dbReference type="GO" id="GO:0033818">
    <property type="term" value="F:beta-ketoacyl-acyl-carrier-protein synthase III activity"/>
    <property type="evidence" value="ECO:0007669"/>
    <property type="project" value="UniProtKB-UniRule"/>
</dbReference>
<dbReference type="GO" id="GO:0006633">
    <property type="term" value="P:fatty acid biosynthetic process"/>
    <property type="evidence" value="ECO:0007669"/>
    <property type="project" value="UniProtKB-UniRule"/>
</dbReference>
<dbReference type="GO" id="GO:0044550">
    <property type="term" value="P:secondary metabolite biosynthetic process"/>
    <property type="evidence" value="ECO:0007669"/>
    <property type="project" value="TreeGrafter"/>
</dbReference>
<dbReference type="CDD" id="cd00830">
    <property type="entry name" value="KAS_III"/>
    <property type="match status" value="1"/>
</dbReference>
<dbReference type="FunFam" id="3.40.47.10:FF:000004">
    <property type="entry name" value="3-oxoacyl-[acyl-carrier-protein] synthase 3"/>
    <property type="match status" value="1"/>
</dbReference>
<dbReference type="Gene3D" id="3.40.47.10">
    <property type="match status" value="1"/>
</dbReference>
<dbReference type="HAMAP" id="MF_01815">
    <property type="entry name" value="FabH"/>
    <property type="match status" value="1"/>
</dbReference>
<dbReference type="InterPro" id="IPR013747">
    <property type="entry name" value="ACP_syn_III_C"/>
</dbReference>
<dbReference type="InterPro" id="IPR013751">
    <property type="entry name" value="ACP_syn_III_N"/>
</dbReference>
<dbReference type="InterPro" id="IPR004655">
    <property type="entry name" value="FabH"/>
</dbReference>
<dbReference type="InterPro" id="IPR016039">
    <property type="entry name" value="Thiolase-like"/>
</dbReference>
<dbReference type="NCBIfam" id="TIGR00747">
    <property type="entry name" value="fabH"/>
    <property type="match status" value="1"/>
</dbReference>
<dbReference type="NCBIfam" id="NF006829">
    <property type="entry name" value="PRK09352.1"/>
    <property type="match status" value="1"/>
</dbReference>
<dbReference type="PANTHER" id="PTHR34069">
    <property type="entry name" value="3-OXOACYL-[ACYL-CARRIER-PROTEIN] SYNTHASE 3"/>
    <property type="match status" value="1"/>
</dbReference>
<dbReference type="PANTHER" id="PTHR34069:SF2">
    <property type="entry name" value="BETA-KETOACYL-[ACYL-CARRIER-PROTEIN] SYNTHASE III"/>
    <property type="match status" value="1"/>
</dbReference>
<dbReference type="Pfam" id="PF08545">
    <property type="entry name" value="ACP_syn_III"/>
    <property type="match status" value="1"/>
</dbReference>
<dbReference type="Pfam" id="PF08541">
    <property type="entry name" value="ACP_syn_III_C"/>
    <property type="match status" value="1"/>
</dbReference>
<dbReference type="SUPFAM" id="SSF53901">
    <property type="entry name" value="Thiolase-like"/>
    <property type="match status" value="1"/>
</dbReference>
<protein>
    <recommendedName>
        <fullName evidence="1">Beta-ketoacyl-[acyl-carrier-protein] synthase III</fullName>
        <shortName evidence="1">Beta-ketoacyl-ACP synthase III</shortName>
        <shortName evidence="1">KAS III</shortName>
        <ecNumber evidence="1">2.3.1.180</ecNumber>
    </recommendedName>
    <alternativeName>
        <fullName evidence="1">3-oxoacyl-[acyl-carrier-protein] synthase 3</fullName>
    </alternativeName>
    <alternativeName>
        <fullName evidence="1">3-oxoacyl-[acyl-carrier-protein] synthase III</fullName>
    </alternativeName>
</protein>
<evidence type="ECO:0000255" key="1">
    <source>
        <dbReference type="HAMAP-Rule" id="MF_01815"/>
    </source>
</evidence>
<organism>
    <name type="scientific">Helicobacter pylori (strain G27)</name>
    <dbReference type="NCBI Taxonomy" id="563041"/>
    <lineage>
        <taxon>Bacteria</taxon>
        <taxon>Pseudomonadati</taxon>
        <taxon>Campylobacterota</taxon>
        <taxon>Epsilonproteobacteria</taxon>
        <taxon>Campylobacterales</taxon>
        <taxon>Helicobacteraceae</taxon>
        <taxon>Helicobacter</taxon>
    </lineage>
</organism>
<keyword id="KW-0012">Acyltransferase</keyword>
<keyword id="KW-0963">Cytoplasm</keyword>
<keyword id="KW-0275">Fatty acid biosynthesis</keyword>
<keyword id="KW-0276">Fatty acid metabolism</keyword>
<keyword id="KW-0444">Lipid biosynthesis</keyword>
<keyword id="KW-0443">Lipid metabolism</keyword>
<keyword id="KW-0511">Multifunctional enzyme</keyword>
<keyword id="KW-1185">Reference proteome</keyword>
<keyword id="KW-0808">Transferase</keyword>